<keyword id="KW-0106">Calcium</keyword>
<keyword id="KW-1015">Disulfide bond</keyword>
<keyword id="KW-0430">Lectin</keyword>
<keyword id="KW-0479">Metal-binding</keyword>
<keyword id="KW-0964">Secreted</keyword>
<keyword id="KW-0732">Signal</keyword>
<accession>Q9I929</accession>
<proteinExistence type="evidence at transcript level"/>
<sequence length="180" mass="19770">MEVKMIILLFQILAISTLKSDSADIPEGYIQENVALRGRATQSAQLKGEFAGFAHASNAIDGNRDSNYHHGSCSHTEGDNSWWRVDLKQVYTITSVTITNRGDCCGERISGARILIGKHLENNGINNPECSTINIMAAGETKTFHCPQPMIGRYVTVYLPKAESLQLCEVEVNVLFPAPC</sequence>
<protein>
    <recommendedName>
        <fullName>Fucolectin-3</fullName>
    </recommendedName>
</protein>
<reference evidence="5 6" key="1">
    <citation type="journal article" date="2000" name="J. Biol. Chem.">
        <title>Multiplicity, structures, and endocrine and exocrine natures of eel fucose-binding lectins.</title>
        <authorList>
            <person name="Honda S."/>
            <person name="Kashiwagi M."/>
            <person name="Miyamoto K."/>
            <person name="Takei Y."/>
            <person name="Hirose S."/>
        </authorList>
    </citation>
    <scope>NUCLEOTIDE SEQUENCE [MRNA]</scope>
    <scope>FUNCTION</scope>
    <scope>SUBCELLULAR LOCATION</scope>
    <scope>TISSUE SPECIFICITY</scope>
    <source>
        <tissue evidence="6">Liver</tissue>
    </source>
</reference>
<evidence type="ECO:0000250" key="1"/>
<evidence type="ECO:0000250" key="2">
    <source>
        <dbReference type="UniProtKB" id="Q7SIC1"/>
    </source>
</evidence>
<evidence type="ECO:0000255" key="3"/>
<evidence type="ECO:0000269" key="4">
    <source>
    </source>
</evidence>
<evidence type="ECO:0000305" key="5"/>
<evidence type="ECO:0000312" key="6">
    <source>
        <dbReference type="EMBL" id="BAB03525.1"/>
    </source>
</evidence>
<name>FUCL3_ANGJA</name>
<comment type="function">
    <text evidence="4">Acts as a defensive agent. Recognizes blood group fucosylated oligosaccharides including A, B, H and Lewis B-type antigens. Does not recognize Lewis A antigen and has low affinity for monovalent haptens.</text>
</comment>
<comment type="subunit">
    <text evidence="2">Homotrimer.</text>
</comment>
<comment type="subcellular location">
    <subcellularLocation>
        <location evidence="4">Secreted</location>
        <location evidence="4">Extracellular space</location>
    </subcellularLocation>
</comment>
<comment type="tissue specificity">
    <text evidence="4">Parenchymal hepatocytes.</text>
</comment>
<comment type="miscellaneous">
    <text evidence="1">Binds 1 calcium ion per monomer.</text>
</comment>
<comment type="similarity">
    <text evidence="5">Belongs to the fucolectin family.</text>
</comment>
<dbReference type="EMBL" id="AB037869">
    <property type="protein sequence ID" value="BAB03525.1"/>
    <property type="molecule type" value="mRNA"/>
</dbReference>
<dbReference type="SMR" id="Q9I929"/>
<dbReference type="CAZy" id="CBM47">
    <property type="family name" value="Carbohydrate-Binding Module Family 47"/>
</dbReference>
<dbReference type="GO" id="GO:0005615">
    <property type="term" value="C:extracellular space"/>
    <property type="evidence" value="ECO:0000314"/>
    <property type="project" value="UniProtKB"/>
</dbReference>
<dbReference type="GO" id="GO:0005509">
    <property type="term" value="F:calcium ion binding"/>
    <property type="evidence" value="ECO:0000250"/>
    <property type="project" value="UniProtKB"/>
</dbReference>
<dbReference type="GO" id="GO:0030246">
    <property type="term" value="F:carbohydrate binding"/>
    <property type="evidence" value="ECO:0000314"/>
    <property type="project" value="UniProtKB"/>
</dbReference>
<dbReference type="GO" id="GO:0042806">
    <property type="term" value="F:fucose binding"/>
    <property type="evidence" value="ECO:0000314"/>
    <property type="project" value="UniProtKB"/>
</dbReference>
<dbReference type="GO" id="GO:0010185">
    <property type="term" value="P:regulation of cellular defense response"/>
    <property type="evidence" value="ECO:0000304"/>
    <property type="project" value="UniProtKB"/>
</dbReference>
<dbReference type="GO" id="GO:0001868">
    <property type="term" value="P:regulation of complement activation, lectin pathway"/>
    <property type="evidence" value="ECO:0000304"/>
    <property type="project" value="UniProtKB"/>
</dbReference>
<dbReference type="GO" id="GO:0045088">
    <property type="term" value="P:regulation of innate immune response"/>
    <property type="evidence" value="ECO:0000304"/>
    <property type="project" value="UniProtKB"/>
</dbReference>
<dbReference type="FunFam" id="2.60.120.260:FF:000183">
    <property type="entry name" value="Fucolectin"/>
    <property type="match status" value="1"/>
</dbReference>
<dbReference type="Gene3D" id="2.60.120.260">
    <property type="entry name" value="Galactose-binding domain-like"/>
    <property type="match status" value="1"/>
</dbReference>
<dbReference type="InterPro" id="IPR051941">
    <property type="entry name" value="BG_Antigen-Binding_Lectin"/>
</dbReference>
<dbReference type="InterPro" id="IPR006585">
    <property type="entry name" value="FTP1"/>
</dbReference>
<dbReference type="InterPro" id="IPR008979">
    <property type="entry name" value="Galactose-bd-like_sf"/>
</dbReference>
<dbReference type="PANTHER" id="PTHR45713">
    <property type="entry name" value="FTP DOMAIN-CONTAINING PROTEIN"/>
    <property type="match status" value="1"/>
</dbReference>
<dbReference type="PANTHER" id="PTHR45713:SF8">
    <property type="entry name" value="SI:CH211-215K15.4"/>
    <property type="match status" value="1"/>
</dbReference>
<dbReference type="Pfam" id="PF22633">
    <property type="entry name" value="F5_F8_type_C_2"/>
    <property type="match status" value="1"/>
</dbReference>
<dbReference type="SMART" id="SM00607">
    <property type="entry name" value="FTP"/>
    <property type="match status" value="1"/>
</dbReference>
<dbReference type="SUPFAM" id="SSF49785">
    <property type="entry name" value="Galactose-binding domain-like"/>
    <property type="match status" value="1"/>
</dbReference>
<organism>
    <name type="scientific">Anguilla japonica</name>
    <name type="common">Japanese eel</name>
    <dbReference type="NCBI Taxonomy" id="7937"/>
    <lineage>
        <taxon>Eukaryota</taxon>
        <taxon>Metazoa</taxon>
        <taxon>Chordata</taxon>
        <taxon>Craniata</taxon>
        <taxon>Vertebrata</taxon>
        <taxon>Euteleostomi</taxon>
        <taxon>Actinopterygii</taxon>
        <taxon>Neopterygii</taxon>
        <taxon>Teleostei</taxon>
        <taxon>Anguilliformes</taxon>
        <taxon>Anguillidae</taxon>
        <taxon>Anguilla</taxon>
    </lineage>
</organism>
<feature type="signal peptide" evidence="3">
    <location>
        <begin position="1"/>
        <end position="22"/>
    </location>
</feature>
<feature type="chain" id="PRO_0000223934" description="Fucolectin-3" evidence="5">
    <location>
        <begin position="23"/>
        <end position="180"/>
    </location>
</feature>
<feature type="region of interest" description="F5/8 type C-like">
    <location>
        <begin position="31"/>
        <end position="179"/>
    </location>
</feature>
<feature type="short sequence motif" description="Cell attachment site" evidence="3">
    <location>
        <begin position="101"/>
        <end position="103"/>
    </location>
</feature>
<feature type="binding site" evidence="1">
    <location>
        <position position="58"/>
    </location>
    <ligand>
        <name>Ca(2+)</name>
        <dbReference type="ChEBI" id="CHEBI:29108"/>
    </ligand>
</feature>
<feature type="binding site" evidence="2">
    <location>
        <position position="61"/>
    </location>
    <ligand>
        <name>Ca(2+)</name>
        <dbReference type="ChEBI" id="CHEBI:29108"/>
    </ligand>
</feature>
<feature type="binding site" evidence="1">
    <location>
        <position position="63"/>
    </location>
    <ligand>
        <name>Ca(2+)</name>
        <dbReference type="ChEBI" id="CHEBI:29108"/>
    </ligand>
</feature>
<feature type="binding site" evidence="2">
    <location>
        <position position="72"/>
    </location>
    <ligand>
        <name>Ca(2+)</name>
        <dbReference type="ChEBI" id="CHEBI:29108"/>
    </ligand>
</feature>
<feature type="binding site" evidence="2">
    <location>
        <position position="75"/>
    </location>
    <ligand>
        <name>alpha-L-fucose</name>
        <dbReference type="ChEBI" id="CHEBI:42548"/>
    </ligand>
</feature>
<feature type="binding site" evidence="2">
    <location>
        <position position="101"/>
    </location>
    <ligand>
        <name>alpha-L-fucose</name>
        <dbReference type="ChEBI" id="CHEBI:42548"/>
    </ligand>
</feature>
<feature type="binding site" evidence="2">
    <location>
        <position position="108"/>
    </location>
    <ligand>
        <name>alpha-L-fucose</name>
        <dbReference type="ChEBI" id="CHEBI:42548"/>
    </ligand>
</feature>
<feature type="binding site" evidence="1">
    <location>
        <position position="168"/>
    </location>
    <ligand>
        <name>Ca(2+)</name>
        <dbReference type="ChEBI" id="CHEBI:29108"/>
    </ligand>
</feature>
<feature type="binding site" evidence="2">
    <location>
        <position position="169"/>
    </location>
    <ligand>
        <name>Ca(2+)</name>
        <dbReference type="ChEBI" id="CHEBI:29108"/>
    </ligand>
</feature>
<feature type="disulfide bond" evidence="2">
    <location>
        <begin position="73"/>
        <end position="168"/>
    </location>
</feature>
<feature type="disulfide bond" evidence="2">
    <location>
        <begin position="104"/>
        <end position="105"/>
    </location>
</feature>
<feature type="disulfide bond" evidence="2">
    <location>
        <begin position="130"/>
        <end position="146"/>
    </location>
</feature>